<name>ALB1E_PEA</name>
<dbReference type="EMBL" id="M81864">
    <property type="protein sequence ID" value="AAC61879.1"/>
    <property type="molecule type" value="Genomic_DNA"/>
</dbReference>
<dbReference type="EMBL" id="AJ574795">
    <property type="protein sequence ID" value="CAE00467.1"/>
    <property type="molecule type" value="Genomic_DNA"/>
</dbReference>
<dbReference type="GO" id="GO:0045735">
    <property type="term" value="F:nutrient reservoir activity"/>
    <property type="evidence" value="ECO:0007669"/>
    <property type="project" value="UniProtKB-KW"/>
</dbReference>
<dbReference type="GO" id="GO:0090729">
    <property type="term" value="F:toxin activity"/>
    <property type="evidence" value="ECO:0007669"/>
    <property type="project" value="UniProtKB-KW"/>
</dbReference>
<dbReference type="InterPro" id="IPR012512">
    <property type="entry name" value="Albumin_I"/>
</dbReference>
<dbReference type="InterPro" id="IPR032000">
    <property type="entry name" value="Albumin_I_a"/>
</dbReference>
<dbReference type="Pfam" id="PF08027">
    <property type="entry name" value="Albumin_I"/>
    <property type="match status" value="1"/>
</dbReference>
<dbReference type="Pfam" id="PF16720">
    <property type="entry name" value="Albumin_I_a"/>
    <property type="match status" value="1"/>
</dbReference>
<dbReference type="SUPFAM" id="SSF57059">
    <property type="entry name" value="omega toxin-like"/>
    <property type="match status" value="1"/>
</dbReference>
<organism>
    <name type="scientific">Pisum sativum</name>
    <name type="common">Garden pea</name>
    <name type="synonym">Lathyrus oleraceus</name>
    <dbReference type="NCBI Taxonomy" id="3888"/>
    <lineage>
        <taxon>Eukaryota</taxon>
        <taxon>Viridiplantae</taxon>
        <taxon>Streptophyta</taxon>
        <taxon>Embryophyta</taxon>
        <taxon>Tracheophyta</taxon>
        <taxon>Spermatophyta</taxon>
        <taxon>Magnoliopsida</taxon>
        <taxon>eudicotyledons</taxon>
        <taxon>Gunneridae</taxon>
        <taxon>Pentapetalae</taxon>
        <taxon>rosids</taxon>
        <taxon>fabids</taxon>
        <taxon>Fabales</taxon>
        <taxon>Fabaceae</taxon>
        <taxon>Papilionoideae</taxon>
        <taxon>50 kb inversion clade</taxon>
        <taxon>NPAAA clade</taxon>
        <taxon>Hologalegina</taxon>
        <taxon>IRL clade</taxon>
        <taxon>Fabeae</taxon>
        <taxon>Pisum</taxon>
    </lineage>
</organism>
<proteinExistence type="inferred from homology"/>
<protein>
    <recommendedName>
        <fullName>Albumin-1 E</fullName>
    </recommendedName>
    <alternativeName>
        <fullName>PA1 E</fullName>
    </alternativeName>
    <alternativeName>
        <fullName>PsaA1b014</fullName>
        <shortName>Psa</shortName>
    </alternativeName>
    <component>
        <recommendedName>
            <fullName>Albumin-1 E chain b</fullName>
        </recommendedName>
        <alternativeName>
            <fullName>Leginsulin E</fullName>
        </alternativeName>
        <alternativeName>
            <fullName>PA1b E</fullName>
        </alternativeName>
    </component>
    <component>
        <recommendedName>
            <fullName>Albumin-1 E chain a</fullName>
        </recommendedName>
        <alternativeName>
            <fullName>PA1a E</fullName>
        </alternativeName>
    </component>
</protein>
<feature type="signal peptide" evidence="2">
    <location>
        <begin position="1"/>
        <end position="26"/>
    </location>
</feature>
<feature type="chain" id="PRO_0000032231" description="Albumin-1 E chain b">
    <location>
        <begin position="27"/>
        <end position="63"/>
    </location>
</feature>
<feature type="propeptide" id="PRO_0000032232" evidence="2">
    <location>
        <begin position="64"/>
        <end position="69"/>
    </location>
</feature>
<feature type="chain" id="PRO_0000032233" description="Albumin-1 E chain a">
    <location>
        <begin position="70"/>
        <end position="122"/>
    </location>
</feature>
<feature type="propeptide" id="PRO_0000032234" evidence="2">
    <location>
        <begin position="123"/>
        <end position="130"/>
    </location>
</feature>
<feature type="disulfide bond" evidence="1">
    <location>
        <begin position="29"/>
        <end position="46"/>
    </location>
</feature>
<feature type="disulfide bond" evidence="1">
    <location>
        <begin position="33"/>
        <end position="48"/>
    </location>
</feature>
<feature type="disulfide bond" evidence="1">
    <location>
        <begin position="41"/>
        <end position="58"/>
    </location>
</feature>
<reference key="1">
    <citation type="journal article" date="1998" name="Mol. Gen. Genet.">
        <title>Downstream elements from the pea albumin 1 gene confer sulfur responsiveness on a reporter gene.</title>
        <authorList>
            <person name="Morton R.L."/>
            <person name="Ellery A.J."/>
            <person name="Higgins T.J."/>
        </authorList>
    </citation>
    <scope>NUCLEOTIDE SEQUENCE [GENOMIC DNA]</scope>
    <source>
        <strain>cv. Greenfeast</strain>
    </source>
</reference>
<reference key="2">
    <citation type="journal article" date="2004" name="Plant Sci.">
        <title>Molecular and biological screening for insect-toxic seed albumins from four legume species.</title>
        <authorList>
            <person name="Louis S."/>
            <person name="Delobel B."/>
            <person name="Gressent F."/>
            <person name="Rahioui I."/>
            <person name="Quillien L."/>
            <person name="Vallier A."/>
            <person name="Rahbe Y."/>
        </authorList>
        <dbReference type="AGRICOLA" id="IND43645431"/>
    </citation>
    <scope>NUCLEOTIDE SEQUENCE [GENOMIC DNA]</scope>
    <source>
        <strain>cv. Frisson</strain>
        <tissue>Seed</tissue>
    </source>
</reference>
<comment type="function">
    <text evidence="1">PA1b binds to basic 7S globulin (BG) and stimulates its phosphorylation activity. Involved in the signal transduction system to regulate the growth and differentiation as a hormone peptide. Toxic to various insects through binding to a high affinity binding site in the insect gut (By similarity).</text>
</comment>
<comment type="domain">
    <text evidence="1">The presence of a 'disulfide through disulfide knot' structurally defines this protein as a knottin.</text>
</comment>
<comment type="PTM">
    <text>The C-terminal glycine may be removed from PA1b.</text>
</comment>
<accession>P62930</accession>
<accession>P08687</accession>
<accession>Q40999</accession>
<accession>Q7XZC1</accession>
<accession>Q9M3X4</accession>
<sequence length="130" mass="13778">MASVKLASLIVLFATLGMFLTKNVGAASCNGVCSPFEMPPCGSSACRCIPVGLLIGYCRNPSGVFLKGNDEHPNLCESDADCKKKGSGNFCGHYPNPDIEYGWCFASKSEAEDVFSKITPKDLLKSVSTA</sequence>
<evidence type="ECO:0000250" key="1"/>
<evidence type="ECO:0000255" key="2"/>
<keyword id="KW-1015">Disulfide bond</keyword>
<keyword id="KW-0960">Knottin</keyword>
<keyword id="KW-0708">Seed storage protein</keyword>
<keyword id="KW-0732">Signal</keyword>
<keyword id="KW-0758">Storage protein</keyword>
<keyword id="KW-0800">Toxin</keyword>